<reference key="1">
    <citation type="journal article" date="1995" name="Cell">
        <title>Regulation of clathrin assembly and trimerization defined using recombinant triskelion hubs.</title>
        <authorList>
            <person name="Liu S.-H."/>
            <person name="Wong M.L."/>
            <person name="Craik C.S."/>
            <person name="Brodsky F.M."/>
        </authorList>
    </citation>
    <scope>NUCLEOTIDE SEQUENCE [MRNA]</scope>
    <source>
        <tissue>Kidney</tissue>
    </source>
</reference>
<reference key="2">
    <citation type="journal article" date="1995" name="Nature">
        <title>Role of auxilin in uncoating clathrin-coated vesicles.</title>
        <authorList>
            <person name="Ungewickell E."/>
            <person name="Ungewickell H."/>
            <person name="Holstein S.E."/>
            <person name="Lindner R."/>
            <person name="Prasad K."/>
            <person name="Barouch W."/>
            <person name="Martin B."/>
            <person name="Greene L.E."/>
            <person name="Eisenberg E."/>
        </authorList>
    </citation>
    <scope>FUNCTION</scope>
    <scope>INTERACTION WITH DNAJC6</scope>
</reference>
<reference key="3">
    <citation type="journal article" date="2001" name="J. Biol. Chem.">
        <title>Multiple interactions of auxilin 1 with clathrin and the AP-2 adaptor complex.</title>
        <authorList>
            <person name="Scheele U."/>
            <person name="Kalthoff C."/>
            <person name="Ungewickell E."/>
        </authorList>
    </citation>
    <scope>FUNCTION</scope>
    <scope>INTERACTION WITH DNAJC6</scope>
</reference>
<reference key="4">
    <citation type="journal article" date="2010" name="J. Biol. Chem.">
        <title>The connecdenn family, Rab35 guanine nucleotide exchange factors interfacing with the clathrin machinery.</title>
        <authorList>
            <person name="Marat A.L."/>
            <person name="McPherson P.S."/>
        </authorList>
    </citation>
    <scope>INTERACTION WITH DENND1A; DENND1B AND DENND1C</scope>
</reference>
<reference evidence="10" key="5">
    <citation type="journal article" date="2004" name="Nature">
        <title>Structure of an auxilin-bound clathrin coat and its implications for the mechanism of uncoating.</title>
        <authorList>
            <person name="Fotin A."/>
            <person name="Cheng Y."/>
            <person name="Grigorieff N."/>
            <person name="Walz T."/>
            <person name="Harrison S.C."/>
            <person name="Kirchhausen T."/>
        </authorList>
    </citation>
    <scope>STRUCTURE BY ELECTRON MICROSCOPY (12.00 ANGSTROMS) OF 1-1630 IN COMPLEX WITH DNAJC6</scope>
    <scope>FUNCTION</scope>
</reference>
<evidence type="ECO:0000250" key="1"/>
<evidence type="ECO:0000250" key="2">
    <source>
        <dbReference type="UniProtKB" id="P11442"/>
    </source>
</evidence>
<evidence type="ECO:0000250" key="3">
    <source>
        <dbReference type="UniProtKB" id="Q00610"/>
    </source>
</evidence>
<evidence type="ECO:0000250" key="4">
    <source>
        <dbReference type="UniProtKB" id="Q68FD5"/>
    </source>
</evidence>
<evidence type="ECO:0000255" key="5"/>
<evidence type="ECO:0000269" key="6">
    <source>
    </source>
</evidence>
<evidence type="ECO:0000269" key="7">
    <source>
    </source>
</evidence>
<evidence type="ECO:0000269" key="8">
    <source>
    </source>
</evidence>
<evidence type="ECO:0000305" key="9"/>
<evidence type="ECO:0007744" key="10">
    <source>
        <dbReference type="PDB" id="1XI5"/>
    </source>
</evidence>
<evidence type="ECO:0007829" key="11">
    <source>
        <dbReference type="PDB" id="1B89"/>
    </source>
</evidence>
<evidence type="ECO:0007829" key="12">
    <source>
        <dbReference type="PDB" id="5M5T"/>
    </source>
</evidence>
<name>CLH1_BOVIN</name>
<feature type="initiator methionine" description="Removed" evidence="3">
    <location>
        <position position="1"/>
    </location>
</feature>
<feature type="chain" id="PRO_0000205777" description="Clathrin heavy chain 1">
    <location>
        <begin position="2"/>
        <end position="1675"/>
    </location>
</feature>
<feature type="repeat" description="CHCR 1">
    <location>
        <begin position="537"/>
        <end position="683"/>
    </location>
</feature>
<feature type="repeat" description="CHCR 2">
    <location>
        <begin position="686"/>
        <end position="828"/>
    </location>
</feature>
<feature type="repeat" description="CHCR 3">
    <location>
        <begin position="833"/>
        <end position="972"/>
    </location>
</feature>
<feature type="repeat" description="CHCR 4">
    <location>
        <begin position="979"/>
        <end position="1124"/>
    </location>
</feature>
<feature type="repeat" description="CHCR 5">
    <location>
        <begin position="1128"/>
        <end position="1269"/>
    </location>
</feature>
<feature type="repeat" description="CHCR 6">
    <location>
        <begin position="1274"/>
        <end position="1420"/>
    </location>
</feature>
<feature type="repeat" description="CHCR 7">
    <location>
        <begin position="1423"/>
        <end position="1566"/>
    </location>
</feature>
<feature type="region of interest" description="Globular terminal domain">
    <location>
        <begin position="2"/>
        <end position="479"/>
    </location>
</feature>
<feature type="region of interest" description="WD40-like repeat 1">
    <location>
        <begin position="24"/>
        <end position="67"/>
    </location>
</feature>
<feature type="region of interest" description="WD40-like repeat 2">
    <location>
        <begin position="68"/>
        <end position="107"/>
    </location>
</feature>
<feature type="region of interest" description="WD40-like repeat 3">
    <location>
        <begin position="108"/>
        <end position="149"/>
    </location>
</feature>
<feature type="region of interest" description="WD40-like repeat 4">
    <location>
        <begin position="150"/>
        <end position="195"/>
    </location>
</feature>
<feature type="region of interest" description="WD40-like repeat 5">
    <location>
        <begin position="196"/>
        <end position="257"/>
    </location>
</feature>
<feature type="region of interest" description="WD40-like repeat 6">
    <location>
        <begin position="258"/>
        <end position="301"/>
    </location>
</feature>
<feature type="region of interest" description="WD40-like repeat 7">
    <location>
        <begin position="302"/>
        <end position="330"/>
    </location>
</feature>
<feature type="region of interest" description="Binding site for the uncoating ATPase, involved in lattice disassembly" evidence="5">
    <location>
        <begin position="449"/>
        <end position="465"/>
    </location>
</feature>
<feature type="region of interest" description="Flexible linker">
    <location>
        <begin position="480"/>
        <end position="523"/>
    </location>
</feature>
<feature type="region of interest" description="Heavy chain arm">
    <location>
        <begin position="524"/>
        <end position="1675"/>
    </location>
</feature>
<feature type="region of interest" description="Distal segment">
    <location>
        <begin position="524"/>
        <end position="634"/>
    </location>
</feature>
<feature type="region of interest" description="Proximal segment">
    <location>
        <begin position="639"/>
        <end position="1675"/>
    </location>
</feature>
<feature type="region of interest" description="Involved in binding clathrin light chain">
    <location>
        <begin position="1213"/>
        <end position="1522"/>
    </location>
</feature>
<feature type="region of interest" description="Trimerization">
    <location>
        <begin position="1550"/>
        <end position="1675"/>
    </location>
</feature>
<feature type="modified residue" description="N-acetylalanine" evidence="3">
    <location>
        <position position="2"/>
    </location>
</feature>
<feature type="modified residue" description="Phosphoserine" evidence="3">
    <location>
        <position position="67"/>
    </location>
</feature>
<feature type="modified residue" description="Phosphothreonine" evidence="4">
    <location>
        <position position="105"/>
    </location>
</feature>
<feature type="modified residue" description="Phosphotyrosine" evidence="4">
    <location>
        <position position="184"/>
    </location>
</feature>
<feature type="modified residue" description="Phosphothreonine" evidence="3">
    <location>
        <position position="394"/>
    </location>
</feature>
<feature type="modified residue" description="Phosphotyrosine" evidence="3">
    <location>
        <position position="634"/>
    </location>
</feature>
<feature type="modified residue" description="N6-succinyllysine" evidence="4">
    <location>
        <position position="737"/>
    </location>
</feature>
<feature type="modified residue" description="N6-acetyllysine" evidence="3">
    <location>
        <position position="856"/>
    </location>
</feature>
<feature type="modified residue" description="Phosphotyrosine" evidence="4">
    <location>
        <position position="899"/>
    </location>
</feature>
<feature type="modified residue" description="Phosphoserine" evidence="4">
    <location>
        <position position="1167"/>
    </location>
</feature>
<feature type="modified residue" description="Phosphotyrosine" evidence="4">
    <location>
        <position position="1206"/>
    </location>
</feature>
<feature type="modified residue" description="Phosphoserine" evidence="3">
    <location>
        <position position="1229"/>
    </location>
</feature>
<feature type="modified residue" description="N6-acetyllysine; alternate" evidence="3">
    <location>
        <position position="1441"/>
    </location>
</feature>
<feature type="modified residue" description="N6-succinyllysine; alternate" evidence="4">
    <location>
        <position position="1441"/>
    </location>
</feature>
<feature type="modified residue" description="Phosphotyrosine" evidence="3">
    <location>
        <position position="1477"/>
    </location>
</feature>
<feature type="modified residue" description="Phosphotyrosine" evidence="4">
    <location>
        <position position="1487"/>
    </location>
</feature>
<feature type="modified residue" description="Phosphoserine" evidence="3">
    <location>
        <position position="1494"/>
    </location>
</feature>
<feature type="modified residue" description="N6-acetyllysine" evidence="3">
    <location>
        <position position="1501"/>
    </location>
</feature>
<feature type="strand" evidence="12">
    <location>
        <begin position="6"/>
        <end position="14"/>
    </location>
</feature>
<feature type="helix" evidence="12">
    <location>
        <begin position="15"/>
        <end position="18"/>
    </location>
</feature>
<feature type="helix" evidence="12">
    <location>
        <begin position="22"/>
        <end position="24"/>
    </location>
</feature>
<feature type="turn" evidence="12">
    <location>
        <begin position="27"/>
        <end position="29"/>
    </location>
</feature>
<feature type="strand" evidence="12">
    <location>
        <begin position="30"/>
        <end position="34"/>
    </location>
</feature>
<feature type="strand" evidence="12">
    <location>
        <begin position="37"/>
        <end position="44"/>
    </location>
</feature>
<feature type="strand" evidence="12">
    <location>
        <begin position="47"/>
        <end position="54"/>
    </location>
</feature>
<feature type="strand" evidence="12">
    <location>
        <begin position="62"/>
        <end position="66"/>
    </location>
</feature>
<feature type="strand" evidence="12">
    <location>
        <begin position="69"/>
        <end position="73"/>
    </location>
</feature>
<feature type="strand" evidence="12">
    <location>
        <begin position="75"/>
        <end position="84"/>
    </location>
</feature>
<feature type="strand" evidence="12">
    <location>
        <begin position="87"/>
        <end position="92"/>
    </location>
</feature>
<feature type="turn" evidence="12">
    <location>
        <begin position="93"/>
        <end position="96"/>
    </location>
</feature>
<feature type="strand" evidence="12">
    <location>
        <begin position="97"/>
        <end position="103"/>
    </location>
</feature>
<feature type="strand" evidence="12">
    <location>
        <begin position="108"/>
        <end position="113"/>
    </location>
</feature>
<feature type="strand" evidence="12">
    <location>
        <begin position="115"/>
        <end position="131"/>
    </location>
</feature>
<feature type="strand" evidence="12">
    <location>
        <begin position="139"/>
        <end position="143"/>
    </location>
</feature>
<feature type="helix" evidence="12">
    <location>
        <begin position="146"/>
        <end position="148"/>
    </location>
</feature>
<feature type="strand" evidence="12">
    <location>
        <begin position="152"/>
        <end position="158"/>
    </location>
</feature>
<feature type="strand" evidence="12">
    <location>
        <begin position="164"/>
        <end position="173"/>
    </location>
</feature>
<feature type="strand" evidence="12">
    <location>
        <begin position="176"/>
        <end position="185"/>
    </location>
</feature>
<feature type="turn" evidence="12">
    <location>
        <begin position="186"/>
        <end position="189"/>
    </location>
</feature>
<feature type="strand" evidence="12">
    <location>
        <begin position="190"/>
        <end position="195"/>
    </location>
</feature>
<feature type="strand" evidence="12">
    <location>
        <begin position="197"/>
        <end position="204"/>
    </location>
</feature>
<feature type="strand" evidence="12">
    <location>
        <begin position="213"/>
        <end position="221"/>
    </location>
</feature>
<feature type="strand" evidence="12">
    <location>
        <begin position="226"/>
        <end position="232"/>
    </location>
</feature>
<feature type="strand" evidence="12">
    <location>
        <begin position="246"/>
        <end position="250"/>
    </location>
</feature>
<feature type="helix" evidence="12">
    <location>
        <begin position="254"/>
        <end position="256"/>
    </location>
</feature>
<feature type="strand" evidence="12">
    <location>
        <begin position="261"/>
        <end position="267"/>
    </location>
</feature>
<feature type="turn" evidence="12">
    <location>
        <begin position="268"/>
        <end position="271"/>
    </location>
</feature>
<feature type="strand" evidence="12">
    <location>
        <begin position="272"/>
        <end position="277"/>
    </location>
</feature>
<feature type="strand" evidence="12">
    <location>
        <begin position="280"/>
        <end position="286"/>
    </location>
</feature>
<feature type="turn" evidence="12">
    <location>
        <begin position="287"/>
        <end position="289"/>
    </location>
</feature>
<feature type="strand" evidence="12">
    <location>
        <begin position="292"/>
        <end position="297"/>
    </location>
</feature>
<feature type="strand" evidence="12">
    <location>
        <begin position="303"/>
        <end position="309"/>
    </location>
</feature>
<feature type="turn" evidence="12">
    <location>
        <begin position="310"/>
        <end position="313"/>
    </location>
</feature>
<feature type="strand" evidence="12">
    <location>
        <begin position="314"/>
        <end position="319"/>
    </location>
</feature>
<feature type="strand" evidence="12">
    <location>
        <begin position="323"/>
        <end position="329"/>
    </location>
</feature>
<feature type="turn" evidence="12">
    <location>
        <begin position="331"/>
        <end position="333"/>
    </location>
</feature>
<feature type="helix" evidence="12">
    <location>
        <begin position="334"/>
        <end position="340"/>
    </location>
</feature>
<feature type="helix" evidence="12">
    <location>
        <begin position="345"/>
        <end position="354"/>
    </location>
</feature>
<feature type="helix" evidence="11">
    <location>
        <begin position="1183"/>
        <end position="1186"/>
    </location>
</feature>
<feature type="turn" evidence="11">
    <location>
        <begin position="1187"/>
        <end position="1191"/>
    </location>
</feature>
<feature type="turn" evidence="11">
    <location>
        <begin position="1211"/>
        <end position="1213"/>
    </location>
</feature>
<feature type="helix" evidence="11">
    <location>
        <begin position="1214"/>
        <end position="1220"/>
    </location>
</feature>
<feature type="helix" evidence="11">
    <location>
        <begin position="1224"/>
        <end position="1232"/>
    </location>
</feature>
<feature type="turn" evidence="11">
    <location>
        <begin position="1233"/>
        <end position="1235"/>
    </location>
</feature>
<feature type="helix" evidence="11">
    <location>
        <begin position="1237"/>
        <end position="1247"/>
    </location>
</feature>
<feature type="helix" evidence="11">
    <location>
        <begin position="1250"/>
        <end position="1262"/>
    </location>
</feature>
<feature type="helix" evidence="11">
    <location>
        <begin position="1266"/>
        <end position="1271"/>
    </location>
</feature>
<feature type="turn" evidence="11">
    <location>
        <begin position="1272"/>
        <end position="1278"/>
    </location>
</feature>
<feature type="helix" evidence="11">
    <location>
        <begin position="1280"/>
        <end position="1292"/>
    </location>
</feature>
<feature type="helix" evidence="11">
    <location>
        <begin position="1296"/>
        <end position="1306"/>
    </location>
</feature>
<feature type="helix" evidence="11">
    <location>
        <begin position="1314"/>
        <end position="1325"/>
    </location>
</feature>
<feature type="helix" evidence="11">
    <location>
        <begin position="1329"/>
        <end position="1339"/>
    </location>
</feature>
<feature type="helix" evidence="11">
    <location>
        <begin position="1345"/>
        <end position="1353"/>
    </location>
</feature>
<feature type="turn" evidence="11">
    <location>
        <begin position="1354"/>
        <end position="1356"/>
    </location>
</feature>
<feature type="helix" evidence="11">
    <location>
        <begin position="1358"/>
        <end position="1367"/>
    </location>
</feature>
<feature type="helix" evidence="11">
    <location>
        <begin position="1371"/>
        <end position="1380"/>
    </location>
</feature>
<feature type="turn" evidence="11">
    <location>
        <begin position="1382"/>
        <end position="1385"/>
    </location>
</feature>
<feature type="helix" evidence="11">
    <location>
        <begin position="1388"/>
        <end position="1397"/>
    </location>
</feature>
<feature type="helix" evidence="11">
    <location>
        <begin position="1402"/>
        <end position="1414"/>
    </location>
</feature>
<feature type="helix" evidence="11">
    <location>
        <begin position="1416"/>
        <end position="1418"/>
    </location>
</feature>
<feature type="helix" evidence="11">
    <location>
        <begin position="1419"/>
        <end position="1426"/>
    </location>
</feature>
<feature type="helix" evidence="11">
    <location>
        <begin position="1427"/>
        <end position="1429"/>
    </location>
</feature>
<feature type="helix" evidence="11">
    <location>
        <begin position="1432"/>
        <end position="1441"/>
    </location>
</feature>
<feature type="turn" evidence="11">
    <location>
        <begin position="1445"/>
        <end position="1448"/>
    </location>
</feature>
<feature type="helix" evidence="11">
    <location>
        <begin position="1449"/>
        <end position="1456"/>
    </location>
</feature>
<feature type="helix" evidence="11">
    <location>
        <begin position="1461"/>
        <end position="1473"/>
    </location>
</feature>
<feature type="helix" evidence="11">
    <location>
        <begin position="1477"/>
        <end position="1486"/>
    </location>
</feature>
<feature type="helix" evidence="11">
    <location>
        <begin position="1492"/>
        <end position="1499"/>
    </location>
</feature>
<feature type="helix" evidence="11">
    <location>
        <begin position="1505"/>
        <end position="1515"/>
    </location>
</feature>
<keyword id="KW-0002">3D-structure</keyword>
<keyword id="KW-0007">Acetylation</keyword>
<keyword id="KW-0072">Autophagy</keyword>
<keyword id="KW-0131">Cell cycle</keyword>
<keyword id="KW-0132">Cell division</keyword>
<keyword id="KW-0168">Coated pit</keyword>
<keyword id="KW-0963">Cytoplasm</keyword>
<keyword id="KW-0968">Cytoplasmic vesicle</keyword>
<keyword id="KW-0206">Cytoskeleton</keyword>
<keyword id="KW-0472">Membrane</keyword>
<keyword id="KW-0498">Mitosis</keyword>
<keyword id="KW-0597">Phosphoprotein</keyword>
<keyword id="KW-1185">Reference proteome</keyword>
<keyword id="KW-0677">Repeat</keyword>
<proteinExistence type="evidence at protein level"/>
<sequence length="1675" mass="191589">MAQILPIRFQEHLQLQNLGINPANIGFSTLTMESDKFICIREKVGEQAQVVIIDMNDPSNPIRRPISADSAIMNPASKVIALKAGKTLQIFNIEMKSKMKAHTMTDDVTFWKWISLNTVALVTDNAVYHWSMEGESQPVKMFDRHSSLAGCQIINYRTDAKQKWLLLTGISAQQNRVVGAMQLYSVDRKVSQPIEGHAASFAQFKMEGNAEESTLFCFAVRGQAGGKLHIIEVGTPPTGNQPFPKKAVDVFFPPEAQNDFPVAMQISEKHDVVFLITKYGYIHLYDLETGTCIYMNRISGETIFVTAPHEATAGIIGVNRKGQVLSVCVEEENIIPYITNVLQNPDLALRMAVRNNLAGAEELFARKFNALFAQGNYSEAAKVAANAPKGILRTPDTIRRFQSVPAQPGQTSPLLQYFGILLDQGQLNKYESLELCRPVLQQGRKQLLEKWLKEDKLECSEELGDLVKSVDPTLALSVYLRANVPNKVIQCFAETGQVQKIVLYAKKVGYTPDWIFLLRNVMRISPDQGQQFAQMLVQDEEPLADITQIVDVFMEYNLIQQCTAFLLDALKNNRPSEGPLQTRLLEMNLMHAPQVADAILGNQMFTHYDRAHIAQLCEKAGLLQRALEHFTDLYDIKRAVVHTHLLNPEWLVNYFGSLSVEDSLECLRAMLSANIRQNLQICVQVASKYHEQLSTQSLIELFESFKSFEGLFYFLGSIVNFSQDPDVHFKYIQAACKTGQIKEVERICRESNCYDPERVKNFLKEAKLTDQLPLIIVCDRFDFVHDLVLYLYRNNLQKYIEIYVQKVNPSRLPVVIGGLLDVDCSEDVIKNLILVVRGQFSTDELVAEVEKRNRLKLLLPWLEARIHEGCEEPATHNALAKIYIDSNNNPERFLRENPYYDSRVVGKYCEKRDPHLACVAYERGQCDLELINVCNENSLFKSLSRYLVRRKDPELWGSVLLESNPYRRPLIDQVVQTALSETQDPEEVSVTVKAFMTADLPNELIELLEKIVLDNSVFSEHRNLQNLLILTAIKADRTRVMEYINRLDNYDAPDIANIAISNELFEEAFAIFRKFDVNTSAVQVLIEHIGNLDRAYEFAERCNEPAVWSQLAKAQLQKGMVKEAIDSYIKADDPSSYMEVVQAANTSGNWEELVKYLQMARKKARESYVETELIFALAKTNRLAELEEFINGPNNAHIQQVGDRCYDEKMYDAAKLLYNNVSNFGRLASTLVHLGEYQAAVDGARKANSTRTWKEVCFACVDGKEFRLAQMCGLHIVVHADELEELINYYQDRGYFEELITMLEAALGLERAHMGMFTELAILYSKFKPQKMREHLELFWSRVNIPKVLRAAEQAHLWAELVFLYDKYEEYDNAIITMMNHPTDAWKEGQFKDIITKVANVELYYRAIQFYLEFKPLLLNDLLMVLSPRLDHTRAVNYFSKVKQLPLVKPYLRSVQNHNNKSVNESLNNLFITEEDYQALRTSIDAYDNFDNISLAQRLEKHELIEFRRIAAYLFKGNNRWKQSVELCKKDSLYKDAMQYASESKDTELAEELLQWFLQEEKRECFGACLFTCYDLLRPDVVLETAWRHNIMDFAMPYFIQVMKEYLTKVDKLDASESLRKEEEQATETQPIVYGQPQLMLTAGPSVAVPPQAPFGYGYTAPAYGQPQPGFGYSM</sequence>
<dbReference type="EMBL" id="U31757">
    <property type="protein sequence ID" value="AAC48524.1"/>
    <property type="molecule type" value="mRNA"/>
</dbReference>
<dbReference type="RefSeq" id="NP_776448.1">
    <property type="nucleotide sequence ID" value="NM_174023.2"/>
</dbReference>
<dbReference type="PDB" id="1B89">
    <property type="method" value="X-ray"/>
    <property type="resolution" value="2.60 A"/>
    <property type="chains" value="A=1074-1522"/>
</dbReference>
<dbReference type="PDB" id="1UTC">
    <property type="method" value="X-ray"/>
    <property type="resolution" value="2.30 A"/>
    <property type="chains" value="A/B=1-363"/>
</dbReference>
<dbReference type="PDB" id="1XI4">
    <property type="method" value="EM"/>
    <property type="resolution" value="7.90 A"/>
    <property type="chains" value="A/B/C/D/E/F/G/H/I=1-1630"/>
</dbReference>
<dbReference type="PDB" id="1XI5">
    <property type="method" value="EM"/>
    <property type="resolution" value="12.00 A"/>
    <property type="chains" value="A/B/C/D/E/F/G/H/I=1-1630"/>
</dbReference>
<dbReference type="PDB" id="3GC3">
    <property type="method" value="X-ray"/>
    <property type="resolution" value="2.20 A"/>
    <property type="chains" value="B=1-363"/>
</dbReference>
<dbReference type="PDB" id="3GD1">
    <property type="method" value="X-ray"/>
    <property type="resolution" value="3.50 A"/>
    <property type="chains" value="I=1-363"/>
</dbReference>
<dbReference type="PDB" id="3IYV">
    <property type="method" value="EM"/>
    <property type="resolution" value="7.90 A"/>
    <property type="chains" value="A/B/C/D/E/F/G/H/I=1-1630"/>
</dbReference>
<dbReference type="PDB" id="3LVG">
    <property type="method" value="X-ray"/>
    <property type="resolution" value="7.94 A"/>
    <property type="chains" value="A/B/C=1074-1675"/>
</dbReference>
<dbReference type="PDB" id="3LVH">
    <property type="method" value="X-ray"/>
    <property type="resolution" value="9.00 A"/>
    <property type="chains" value="A/B/C=1074-1675"/>
</dbReference>
<dbReference type="PDB" id="3QIL">
    <property type="method" value="X-ray"/>
    <property type="resolution" value="3.92 A"/>
    <property type="chains" value="A/B/C/D/E/F/G/H/I/J/K/L/M/N/O/P/Q/R/S/T/U/V/W/X=1521-1624"/>
</dbReference>
<dbReference type="PDB" id="5M5R">
    <property type="method" value="X-ray"/>
    <property type="resolution" value="1.76 A"/>
    <property type="chains" value="A=1-363"/>
</dbReference>
<dbReference type="PDB" id="5M5S">
    <property type="method" value="X-ray"/>
    <property type="resolution" value="1.88 A"/>
    <property type="chains" value="A/B=1-363"/>
</dbReference>
<dbReference type="PDB" id="5M5T">
    <property type="method" value="X-ray"/>
    <property type="resolution" value="1.70 A"/>
    <property type="chains" value="A/B=1-363"/>
</dbReference>
<dbReference type="PDB" id="5M5U">
    <property type="method" value="X-ray"/>
    <property type="resolution" value="2.15 A"/>
    <property type="chains" value="A/B=1-363"/>
</dbReference>
<dbReference type="PDB" id="5M5V">
    <property type="method" value="X-ray"/>
    <property type="resolution" value="1.96 A"/>
    <property type="chains" value="A/B=1-363"/>
</dbReference>
<dbReference type="PDB" id="5M61">
    <property type="method" value="X-ray"/>
    <property type="resolution" value="1.84 A"/>
    <property type="chains" value="A/B=1-363"/>
</dbReference>
<dbReference type="PDB" id="6WCJ">
    <property type="method" value="EM"/>
    <property type="resolution" value="6.30 A"/>
    <property type="chains" value="A/C/D/G/H/I/K/L/M=1-1675"/>
</dbReference>
<dbReference type="PDBsum" id="1B89"/>
<dbReference type="PDBsum" id="1UTC"/>
<dbReference type="PDBsum" id="1XI4"/>
<dbReference type="PDBsum" id="1XI5"/>
<dbReference type="PDBsum" id="3GC3"/>
<dbReference type="PDBsum" id="3GD1"/>
<dbReference type="PDBsum" id="3IYV"/>
<dbReference type="PDBsum" id="3LVG"/>
<dbReference type="PDBsum" id="3LVH"/>
<dbReference type="PDBsum" id="3QIL"/>
<dbReference type="PDBsum" id="5M5R"/>
<dbReference type="PDBsum" id="5M5S"/>
<dbReference type="PDBsum" id="5M5T"/>
<dbReference type="PDBsum" id="5M5U"/>
<dbReference type="PDBsum" id="5M5V"/>
<dbReference type="PDBsum" id="5M61"/>
<dbReference type="PDBsum" id="6WCJ"/>
<dbReference type="EMDB" id="EMD-21608"/>
<dbReference type="EMDB" id="EMD-21611"/>
<dbReference type="SMR" id="P49951"/>
<dbReference type="BioGRID" id="158448">
    <property type="interactions" value="4"/>
</dbReference>
<dbReference type="DIP" id="DIP-31603N"/>
<dbReference type="FunCoup" id="P49951">
    <property type="interactions" value="4274"/>
</dbReference>
<dbReference type="IntAct" id="P49951">
    <property type="interactions" value="8"/>
</dbReference>
<dbReference type="MINT" id="P49951"/>
<dbReference type="STRING" id="9913.ENSBTAP00000060092"/>
<dbReference type="PaxDb" id="9913-ENSBTAP00000022210"/>
<dbReference type="PeptideAtlas" id="P49951"/>
<dbReference type="GeneID" id="281080"/>
<dbReference type="KEGG" id="bta:281080"/>
<dbReference type="CTD" id="1213"/>
<dbReference type="VEuPathDB" id="HostDB:ENSBTAG00000016708"/>
<dbReference type="eggNOG" id="KOG0985">
    <property type="taxonomic scope" value="Eukaryota"/>
</dbReference>
<dbReference type="InParanoid" id="P49951"/>
<dbReference type="OMA" id="WLKEDKX"/>
<dbReference type="OrthoDB" id="2113814at2759"/>
<dbReference type="Reactome" id="R-BTA-177504">
    <property type="pathway name" value="Retrograde neurotrophin signalling"/>
</dbReference>
<dbReference type="Reactome" id="R-BTA-190873">
    <property type="pathway name" value="Gap junction degradation"/>
</dbReference>
<dbReference type="Reactome" id="R-BTA-196025">
    <property type="pathway name" value="Formation of annular gap junctions"/>
</dbReference>
<dbReference type="Reactome" id="R-BTA-2132295">
    <property type="pathway name" value="MHC class II antigen presentation"/>
</dbReference>
<dbReference type="Reactome" id="R-BTA-432720">
    <property type="pathway name" value="Lysosome Vesicle Biogenesis"/>
</dbReference>
<dbReference type="Reactome" id="R-BTA-432722">
    <property type="pathway name" value="Golgi Associated Vesicle Biogenesis"/>
</dbReference>
<dbReference type="Reactome" id="R-BTA-437239">
    <property type="pathway name" value="Recycling pathway of L1"/>
</dbReference>
<dbReference type="Reactome" id="R-BTA-5099900">
    <property type="pathway name" value="WNT5A-dependent internalization of FZD4"/>
</dbReference>
<dbReference type="Reactome" id="R-BTA-5140745">
    <property type="pathway name" value="WNT5A-dependent internalization of FZD2, FZD5 and ROR2"/>
</dbReference>
<dbReference type="Reactome" id="R-BTA-8856825">
    <property type="pathway name" value="Cargo recognition for clathrin-mediated endocytosis"/>
</dbReference>
<dbReference type="Reactome" id="R-BTA-8856828">
    <property type="pathway name" value="Clathrin-mediated endocytosis"/>
</dbReference>
<dbReference type="Reactome" id="R-BTA-8866427">
    <property type="pathway name" value="VLDLR internalisation and degradation"/>
</dbReference>
<dbReference type="Reactome" id="R-BTA-8964038">
    <property type="pathway name" value="LDL clearance"/>
</dbReference>
<dbReference type="Reactome" id="R-BTA-9013420">
    <property type="pathway name" value="RHOU GTPase cycle"/>
</dbReference>
<dbReference type="Reactome" id="R-BTA-9013424">
    <property type="pathway name" value="RHOV GTPase cycle"/>
</dbReference>
<dbReference type="EvolutionaryTrace" id="P49951"/>
<dbReference type="Proteomes" id="UP000009136">
    <property type="component" value="Chromosome 19"/>
</dbReference>
<dbReference type="Bgee" id="ENSBTAG00000016708">
    <property type="expression patterns" value="Expressed in prefrontal cortex and 109 other cell types or tissues"/>
</dbReference>
<dbReference type="GO" id="GO:0030132">
    <property type="term" value="C:clathrin coat of coated pit"/>
    <property type="evidence" value="ECO:0007669"/>
    <property type="project" value="InterPro"/>
</dbReference>
<dbReference type="GO" id="GO:0030130">
    <property type="term" value="C:clathrin coat of trans-Golgi network vesicle"/>
    <property type="evidence" value="ECO:0007669"/>
    <property type="project" value="InterPro"/>
</dbReference>
<dbReference type="GO" id="GO:0071439">
    <property type="term" value="C:clathrin complex"/>
    <property type="evidence" value="ECO:0000318"/>
    <property type="project" value="GO_Central"/>
</dbReference>
<dbReference type="GO" id="GO:0045334">
    <property type="term" value="C:clathrin-coated endocytic vesicle"/>
    <property type="evidence" value="ECO:0000318"/>
    <property type="project" value="GO_Central"/>
</dbReference>
<dbReference type="GO" id="GO:0042470">
    <property type="term" value="C:melanosome"/>
    <property type="evidence" value="ECO:0007669"/>
    <property type="project" value="UniProtKB-SubCell"/>
</dbReference>
<dbReference type="GO" id="GO:0030117">
    <property type="term" value="C:membrane coat"/>
    <property type="evidence" value="ECO:0000250"/>
    <property type="project" value="AgBase"/>
</dbReference>
<dbReference type="GO" id="GO:0005739">
    <property type="term" value="C:mitochondrion"/>
    <property type="evidence" value="ECO:0000250"/>
    <property type="project" value="AgBase"/>
</dbReference>
<dbReference type="GO" id="GO:0005819">
    <property type="term" value="C:spindle"/>
    <property type="evidence" value="ECO:0000318"/>
    <property type="project" value="GO_Central"/>
</dbReference>
<dbReference type="GO" id="GO:1990763">
    <property type="term" value="F:arrestin family protein binding"/>
    <property type="evidence" value="ECO:0000353"/>
    <property type="project" value="CAFA"/>
</dbReference>
<dbReference type="GO" id="GO:0032051">
    <property type="term" value="F:clathrin light chain binding"/>
    <property type="evidence" value="ECO:0000318"/>
    <property type="project" value="GO_Central"/>
</dbReference>
<dbReference type="GO" id="GO:0097718">
    <property type="term" value="F:disordered domain specific binding"/>
    <property type="evidence" value="ECO:0000353"/>
    <property type="project" value="CAFA"/>
</dbReference>
<dbReference type="GO" id="GO:0042802">
    <property type="term" value="F:identical protein binding"/>
    <property type="evidence" value="ECO:0000353"/>
    <property type="project" value="IntAct"/>
</dbReference>
<dbReference type="GO" id="GO:0019904">
    <property type="term" value="F:protein domain specific binding"/>
    <property type="evidence" value="ECO:0000353"/>
    <property type="project" value="CAFA"/>
</dbReference>
<dbReference type="GO" id="GO:0005198">
    <property type="term" value="F:structural molecule activity"/>
    <property type="evidence" value="ECO:0007669"/>
    <property type="project" value="InterPro"/>
</dbReference>
<dbReference type="GO" id="GO:0006914">
    <property type="term" value="P:autophagy"/>
    <property type="evidence" value="ECO:0007669"/>
    <property type="project" value="UniProtKB-KW"/>
</dbReference>
<dbReference type="GO" id="GO:0051301">
    <property type="term" value="P:cell division"/>
    <property type="evidence" value="ECO:0007669"/>
    <property type="project" value="UniProtKB-KW"/>
</dbReference>
<dbReference type="GO" id="GO:0048268">
    <property type="term" value="P:clathrin coat assembly"/>
    <property type="evidence" value="ECO:0000315"/>
    <property type="project" value="CAFA"/>
</dbReference>
<dbReference type="GO" id="GO:0072318">
    <property type="term" value="P:clathrin coat disassembly"/>
    <property type="evidence" value="ECO:0000314"/>
    <property type="project" value="UniProtKB"/>
</dbReference>
<dbReference type="GO" id="GO:0006886">
    <property type="term" value="P:intracellular protein transport"/>
    <property type="evidence" value="ECO:0007669"/>
    <property type="project" value="InterPro"/>
</dbReference>
<dbReference type="GO" id="GO:0000278">
    <property type="term" value="P:mitotic cell cycle"/>
    <property type="evidence" value="ECO:0000318"/>
    <property type="project" value="GO_Central"/>
</dbReference>
<dbReference type="GO" id="GO:1900126">
    <property type="term" value="P:negative regulation of hyaluronan biosynthetic process"/>
    <property type="evidence" value="ECO:0000250"/>
    <property type="project" value="UniProtKB"/>
</dbReference>
<dbReference type="GO" id="GO:0006898">
    <property type="term" value="P:receptor-mediated endocytosis"/>
    <property type="evidence" value="ECO:0000318"/>
    <property type="project" value="GO_Central"/>
</dbReference>
<dbReference type="FunFam" id="1.25.40.10:FF:000001">
    <property type="entry name" value="Clathrin heavy chain"/>
    <property type="match status" value="1"/>
</dbReference>
<dbReference type="FunFam" id="1.25.40.10:FF:000002">
    <property type="entry name" value="Clathrin heavy chain"/>
    <property type="match status" value="1"/>
</dbReference>
<dbReference type="FunFam" id="1.25.40.10:FF:000007">
    <property type="entry name" value="Clathrin heavy chain"/>
    <property type="match status" value="1"/>
</dbReference>
<dbReference type="FunFam" id="1.25.40.10:FF:000095">
    <property type="entry name" value="Clathrin heavy chain"/>
    <property type="match status" value="1"/>
</dbReference>
<dbReference type="FunFam" id="1.25.40.730:FF:000001">
    <property type="entry name" value="Clathrin heavy chain"/>
    <property type="match status" value="1"/>
</dbReference>
<dbReference type="FunFam" id="2.130.10.110:FF:000001">
    <property type="entry name" value="Clathrin heavy chain"/>
    <property type="match status" value="1"/>
</dbReference>
<dbReference type="Gene3D" id="1.25.40.730">
    <property type="match status" value="1"/>
</dbReference>
<dbReference type="Gene3D" id="2.130.10.110">
    <property type="entry name" value="Clathrin heavy-chain terminal domain"/>
    <property type="match status" value="1"/>
</dbReference>
<dbReference type="Gene3D" id="1.25.40.10">
    <property type="entry name" value="Tetratricopeptide repeat domain"/>
    <property type="match status" value="4"/>
</dbReference>
<dbReference type="InterPro" id="IPR016024">
    <property type="entry name" value="ARM-type_fold"/>
</dbReference>
<dbReference type="InterPro" id="IPR055358">
    <property type="entry name" value="CHCR"/>
</dbReference>
<dbReference type="InterPro" id="IPR000547">
    <property type="entry name" value="Clathrin_H-chain/VPS_repeat"/>
</dbReference>
<dbReference type="InterPro" id="IPR015348">
    <property type="entry name" value="Clathrin_H-chain_linker_core"/>
</dbReference>
<dbReference type="InterPro" id="IPR016025">
    <property type="entry name" value="Clathrin_H-chain_N"/>
</dbReference>
<dbReference type="InterPro" id="IPR022365">
    <property type="entry name" value="Clathrin_H-chain_propeller_rpt"/>
</dbReference>
<dbReference type="InterPro" id="IPR016341">
    <property type="entry name" value="Clathrin_heavy_chain"/>
</dbReference>
<dbReference type="InterPro" id="IPR011990">
    <property type="entry name" value="TPR-like_helical_dom_sf"/>
</dbReference>
<dbReference type="PANTHER" id="PTHR10292:SF7">
    <property type="entry name" value="CLATHRIN HEAVY CHAIN 1"/>
    <property type="match status" value="1"/>
</dbReference>
<dbReference type="PANTHER" id="PTHR10292">
    <property type="entry name" value="CLATHRIN HEAVY CHAIN RELATED"/>
    <property type="match status" value="1"/>
</dbReference>
<dbReference type="Pfam" id="PF00637">
    <property type="entry name" value="Clathrin"/>
    <property type="match status" value="7"/>
</dbReference>
<dbReference type="Pfam" id="PF09268">
    <property type="entry name" value="Clathrin-link"/>
    <property type="match status" value="1"/>
</dbReference>
<dbReference type="Pfam" id="PF13838">
    <property type="entry name" value="Clathrin_H_link"/>
    <property type="match status" value="1"/>
</dbReference>
<dbReference type="Pfam" id="PF01394">
    <property type="entry name" value="Clathrin_propel"/>
    <property type="match status" value="5"/>
</dbReference>
<dbReference type="PIRSF" id="PIRSF002290">
    <property type="entry name" value="Clathrin_H_chain"/>
    <property type="match status" value="1"/>
</dbReference>
<dbReference type="SMART" id="SM00299">
    <property type="entry name" value="CLH"/>
    <property type="match status" value="7"/>
</dbReference>
<dbReference type="SUPFAM" id="SSF48371">
    <property type="entry name" value="ARM repeat"/>
    <property type="match status" value="6"/>
</dbReference>
<dbReference type="SUPFAM" id="SSF50989">
    <property type="entry name" value="Clathrin heavy-chain terminal domain"/>
    <property type="match status" value="1"/>
</dbReference>
<dbReference type="PROSITE" id="PS50236">
    <property type="entry name" value="CHCR"/>
    <property type="match status" value="7"/>
</dbReference>
<organism>
    <name type="scientific">Bos taurus</name>
    <name type="common">Bovine</name>
    <dbReference type="NCBI Taxonomy" id="9913"/>
    <lineage>
        <taxon>Eukaryota</taxon>
        <taxon>Metazoa</taxon>
        <taxon>Chordata</taxon>
        <taxon>Craniata</taxon>
        <taxon>Vertebrata</taxon>
        <taxon>Euteleostomi</taxon>
        <taxon>Mammalia</taxon>
        <taxon>Eutheria</taxon>
        <taxon>Laurasiatheria</taxon>
        <taxon>Artiodactyla</taxon>
        <taxon>Ruminantia</taxon>
        <taxon>Pecora</taxon>
        <taxon>Bovidae</taxon>
        <taxon>Bovinae</taxon>
        <taxon>Bos</taxon>
    </lineage>
</organism>
<comment type="function">
    <text evidence="2 3 6 7 8">Clathrin is the major protein of the polyhedral coat of coated pits and vesicles. Two different adapter protein complexes link the clathrin lattice either to the plasma membrane or to the trans-Golgi network. Acts as a component of the TACC3/ch-TOG/clathrin complex proposed to contribute to stabilization of kinetochore fibers of the mitotic spindle by acting as inter-microtubule bridge. The TACC3/ch-TOG/clathrin complex is required for the maintenance of kinetochore fiber tension. Plays a role in early autophagosome formation. Interaction with DNAJC6 mediates the recruitment of HSPA8 to the clathrin lattice and creates local destabilization of the lattice promoting uncoating (PubMed:11470803, PubMed:15502813, PubMed:8524399).</text>
</comment>
<comment type="subunit">
    <text evidence="3 4 6 7 8">Clathrin triskelions, composed of 3 heavy chains and 3 light chains, are the basic subunits of the clathrin coat. In the presence of light chains, hub assembly is influenced by both the pH and the concentration of calcium. Interacts with HIP1. Interacts with DENND1A, DENND1B and DENND1C. Interacts with OCRL. Interacts with ERBB2. Interacts with FKBP6 (By similarity). Interacts with CKAP5 and TACC3 forming the TACC3/ch-TOG/clathrin complex located at spindle inter-microtubules bridges; the complex implicates clathrin triskelions; TACC3 and CLTC are proposed to form a composite microtubule interaction surface (By similarity). Interacts with ATG16L1 (via N-terminus). Interacts with RFTN1; the interaction occurs in response to pathogens (By similarity). Interacts with TMEM106B (via N-terminus) (By similarity). Interacts with DNAJC6; this interaction produces a local change in heavy-chain contacts, creating a detectable global distortion of the clathrin coat and leads to the recruitment of HSPA8 (PubMed:11470803, PubMed:15502813, PubMed:8524399).</text>
</comment>
<comment type="interaction">
    <interactant intactId="EBI-448355">
        <id>P49951</id>
    </interactant>
    <interactant intactId="EBI-448355">
        <id>P49951</id>
        <label>CLTC</label>
    </interactant>
    <organismsDiffer>false</organismsDiffer>
    <experiments>2</experiments>
</comment>
<comment type="subcellular location">
    <subcellularLocation>
        <location>Cytoplasmic vesicle membrane</location>
        <topology>Peripheral membrane protein</topology>
        <orientation>Cytoplasmic side</orientation>
    </subcellularLocation>
    <subcellularLocation>
        <location>Membrane</location>
        <location>Coated pit</location>
        <topology>Peripheral membrane protein</topology>
        <orientation>Cytoplasmic side</orientation>
    </subcellularLocation>
    <subcellularLocation>
        <location evidence="1">Melanosome</location>
    </subcellularLocation>
    <subcellularLocation>
        <location evidence="3">Cytoplasm</location>
        <location evidence="3">Cytoskeleton</location>
        <location evidence="3">Spindle</location>
    </subcellularLocation>
    <text evidence="3">Cytoplasmic face of coated pits and vesicles. In complex with TACC3 and CKAP5 (forming the TACC3/ch-TOG/clathrin complex) localized to inter-microtubule bridges in mitotic spindles.</text>
</comment>
<comment type="domain">
    <text>The C-terminal third of the heavy chains forms the hub of the triskelion. This region contains the trimerization domain and the light-chain binding domain involved in the assembly of the clathrin lattice.</text>
</comment>
<comment type="domain">
    <text evidence="1">The N-terminal seven-bladed beta-propeller is formed by WD40-like repeats, and projects inward from the polyhedral outer clathrin coat. It constitutes a major protein-protein interaction node (By similarity).</text>
</comment>
<comment type="similarity">
    <text evidence="9">Belongs to the clathrin heavy chain family.</text>
</comment>
<gene>
    <name evidence="3" type="primary">CLTC</name>
</gene>
<protein>
    <recommendedName>
        <fullName evidence="3">Clathrin heavy chain 1</fullName>
    </recommendedName>
</protein>
<accession>P49951</accession>